<reference key="1">
    <citation type="journal article" date="2009" name="PLoS Genet.">
        <title>Organised genome dynamics in the Escherichia coli species results in highly diverse adaptive paths.</title>
        <authorList>
            <person name="Touchon M."/>
            <person name="Hoede C."/>
            <person name="Tenaillon O."/>
            <person name="Barbe V."/>
            <person name="Baeriswyl S."/>
            <person name="Bidet P."/>
            <person name="Bingen E."/>
            <person name="Bonacorsi S."/>
            <person name="Bouchier C."/>
            <person name="Bouvet O."/>
            <person name="Calteau A."/>
            <person name="Chiapello H."/>
            <person name="Clermont O."/>
            <person name="Cruveiller S."/>
            <person name="Danchin A."/>
            <person name="Diard M."/>
            <person name="Dossat C."/>
            <person name="Karoui M.E."/>
            <person name="Frapy E."/>
            <person name="Garry L."/>
            <person name="Ghigo J.M."/>
            <person name="Gilles A.M."/>
            <person name="Johnson J."/>
            <person name="Le Bouguenec C."/>
            <person name="Lescat M."/>
            <person name="Mangenot S."/>
            <person name="Martinez-Jehanne V."/>
            <person name="Matic I."/>
            <person name="Nassif X."/>
            <person name="Oztas S."/>
            <person name="Petit M.A."/>
            <person name="Pichon C."/>
            <person name="Rouy Z."/>
            <person name="Ruf C.S."/>
            <person name="Schneider D."/>
            <person name="Tourret J."/>
            <person name="Vacherie B."/>
            <person name="Vallenet D."/>
            <person name="Medigue C."/>
            <person name="Rocha E.P.C."/>
            <person name="Denamur E."/>
        </authorList>
    </citation>
    <scope>NUCLEOTIDE SEQUENCE [LARGE SCALE GENOMIC DNA]</scope>
    <source>
        <strain>55989 / EAEC</strain>
    </source>
</reference>
<proteinExistence type="inferred from homology"/>
<keyword id="KW-1185">Reference proteome</keyword>
<feature type="chain" id="PRO_1000146256" description="Surface composition regulator">
    <location>
        <begin position="1"/>
        <end position="66"/>
    </location>
</feature>
<dbReference type="EMBL" id="CU928145">
    <property type="protein sequence ID" value="CAU99594.1"/>
    <property type="molecule type" value="Genomic_DNA"/>
</dbReference>
<dbReference type="RefSeq" id="WP_000350095.1">
    <property type="nucleotide sequence ID" value="NC_011748.1"/>
</dbReference>
<dbReference type="SMR" id="B7LGY3"/>
<dbReference type="GeneID" id="93778946"/>
<dbReference type="KEGG" id="eck:EC55989_3463"/>
<dbReference type="HOGENOM" id="CLU_185971_0_0_6"/>
<dbReference type="Proteomes" id="UP000000746">
    <property type="component" value="Chromosome"/>
</dbReference>
<dbReference type="GO" id="GO:1902201">
    <property type="term" value="P:negative regulation of bacterial-type flagellum-dependent cell motility"/>
    <property type="evidence" value="ECO:0007669"/>
    <property type="project" value="UniProtKB-UniRule"/>
</dbReference>
<dbReference type="GO" id="GO:1900191">
    <property type="term" value="P:negative regulation of single-species biofilm formation"/>
    <property type="evidence" value="ECO:0007669"/>
    <property type="project" value="UniProtKB-UniRule"/>
</dbReference>
<dbReference type="FunFam" id="1.20.970.20:FF:000001">
    <property type="entry name" value="Surface composition regulator"/>
    <property type="match status" value="1"/>
</dbReference>
<dbReference type="Gene3D" id="1.20.970.20">
    <property type="entry name" value="Glycogen synthesis protein GlgS"/>
    <property type="match status" value="1"/>
</dbReference>
<dbReference type="HAMAP" id="MF_00525">
    <property type="entry name" value="GlgS"/>
    <property type="match status" value="1"/>
</dbReference>
<dbReference type="InterPro" id="IPR015065">
    <property type="entry name" value="GlgS"/>
</dbReference>
<dbReference type="InterPro" id="IPR036295">
    <property type="entry name" value="GlgS_sf"/>
</dbReference>
<dbReference type="NCBIfam" id="NF002793">
    <property type="entry name" value="PRK02922.1"/>
    <property type="match status" value="1"/>
</dbReference>
<dbReference type="Pfam" id="PF08971">
    <property type="entry name" value="GlgS"/>
    <property type="match status" value="1"/>
</dbReference>
<dbReference type="SUPFAM" id="SSF109747">
    <property type="entry name" value="Glycogen synthesis protein GlgS"/>
    <property type="match status" value="1"/>
</dbReference>
<gene>
    <name evidence="1" type="primary">glgS</name>
    <name type="ordered locus">EC55989_3463</name>
</gene>
<protein>
    <recommendedName>
        <fullName evidence="1">Surface composition regulator</fullName>
    </recommendedName>
</protein>
<organism>
    <name type="scientific">Escherichia coli (strain 55989 / EAEC)</name>
    <dbReference type="NCBI Taxonomy" id="585055"/>
    <lineage>
        <taxon>Bacteria</taxon>
        <taxon>Pseudomonadati</taxon>
        <taxon>Pseudomonadota</taxon>
        <taxon>Gammaproteobacteria</taxon>
        <taxon>Enterobacterales</taxon>
        <taxon>Enterobacteriaceae</taxon>
        <taxon>Escherichia</taxon>
    </lineage>
</organism>
<comment type="function">
    <text evidence="1">Major determinant of cell surface composition. Negatively regulates motility, adhesion and synthesis of biofilm exopolysaccharides.</text>
</comment>
<comment type="similarity">
    <text evidence="1">Belongs to the GlgS family.</text>
</comment>
<sequence length="66" mass="7892">MDHSLNSLNNFDFLARSFARMHAEGRPVDILAVTGNMDEEHRTWFCARYAWYCQQMMQARELELEH</sequence>
<evidence type="ECO:0000255" key="1">
    <source>
        <dbReference type="HAMAP-Rule" id="MF_00525"/>
    </source>
</evidence>
<accession>B7LGY3</accession>
<name>GLGS_ECO55</name>